<evidence type="ECO:0000255" key="1">
    <source>
        <dbReference type="HAMAP-Rule" id="MF_00818"/>
    </source>
</evidence>
<dbReference type="EC" id="1.7.1.13" evidence="1"/>
<dbReference type="EMBL" id="CP000096">
    <property type="protein sequence ID" value="ABB24481.1"/>
    <property type="molecule type" value="Genomic_DNA"/>
</dbReference>
<dbReference type="RefSeq" id="WP_011358353.1">
    <property type="nucleotide sequence ID" value="NC_007512.1"/>
</dbReference>
<dbReference type="SMR" id="Q3B2F0"/>
<dbReference type="STRING" id="319225.Plut_1627"/>
<dbReference type="KEGG" id="plt:Plut_1627"/>
<dbReference type="eggNOG" id="COG0780">
    <property type="taxonomic scope" value="Bacteria"/>
</dbReference>
<dbReference type="HOGENOM" id="CLU_102489_1_0_10"/>
<dbReference type="OrthoDB" id="9795077at2"/>
<dbReference type="UniPathway" id="UPA00392"/>
<dbReference type="Proteomes" id="UP000002709">
    <property type="component" value="Chromosome"/>
</dbReference>
<dbReference type="GO" id="GO:0005737">
    <property type="term" value="C:cytoplasm"/>
    <property type="evidence" value="ECO:0007669"/>
    <property type="project" value="UniProtKB-SubCell"/>
</dbReference>
<dbReference type="GO" id="GO:0033739">
    <property type="term" value="F:preQ1 synthase activity"/>
    <property type="evidence" value="ECO:0007669"/>
    <property type="project" value="UniProtKB-UniRule"/>
</dbReference>
<dbReference type="GO" id="GO:0008616">
    <property type="term" value="P:queuosine biosynthetic process"/>
    <property type="evidence" value="ECO:0007669"/>
    <property type="project" value="UniProtKB-UniRule"/>
</dbReference>
<dbReference type="GO" id="GO:0006400">
    <property type="term" value="P:tRNA modification"/>
    <property type="evidence" value="ECO:0007669"/>
    <property type="project" value="UniProtKB-UniRule"/>
</dbReference>
<dbReference type="Gene3D" id="3.30.1130.10">
    <property type="match status" value="1"/>
</dbReference>
<dbReference type="HAMAP" id="MF_00818">
    <property type="entry name" value="QueF_type1"/>
    <property type="match status" value="1"/>
</dbReference>
<dbReference type="InterPro" id="IPR043133">
    <property type="entry name" value="GTP-CH-I_C/QueF"/>
</dbReference>
<dbReference type="InterPro" id="IPR050084">
    <property type="entry name" value="NADPH_dep_7-cyano-7-deazaG_red"/>
</dbReference>
<dbReference type="InterPro" id="IPR029500">
    <property type="entry name" value="QueF"/>
</dbReference>
<dbReference type="InterPro" id="IPR016856">
    <property type="entry name" value="QueF_type1"/>
</dbReference>
<dbReference type="NCBIfam" id="TIGR03139">
    <property type="entry name" value="QueF-II"/>
    <property type="match status" value="1"/>
</dbReference>
<dbReference type="PANTHER" id="PTHR34354">
    <property type="entry name" value="NADPH-DEPENDENT 7-CYANO-7-DEAZAGUANINE REDUCTASE"/>
    <property type="match status" value="1"/>
</dbReference>
<dbReference type="PANTHER" id="PTHR34354:SF1">
    <property type="entry name" value="NADPH-DEPENDENT 7-CYANO-7-DEAZAGUANINE REDUCTASE"/>
    <property type="match status" value="1"/>
</dbReference>
<dbReference type="Pfam" id="PF14489">
    <property type="entry name" value="QueF"/>
    <property type="match status" value="1"/>
</dbReference>
<dbReference type="PIRSF" id="PIRSF027377">
    <property type="entry name" value="Nitrile_oxidored_QueF"/>
    <property type="match status" value="1"/>
</dbReference>
<dbReference type="SUPFAM" id="SSF55620">
    <property type="entry name" value="Tetrahydrobiopterin biosynthesis enzymes-like"/>
    <property type="match status" value="1"/>
</dbReference>
<organism>
    <name type="scientific">Chlorobium luteolum (strain DSM 273 / BCRC 81028 / 2530)</name>
    <name type="common">Pelodictyon luteolum</name>
    <dbReference type="NCBI Taxonomy" id="319225"/>
    <lineage>
        <taxon>Bacteria</taxon>
        <taxon>Pseudomonadati</taxon>
        <taxon>Chlorobiota</taxon>
        <taxon>Chlorobiia</taxon>
        <taxon>Chlorobiales</taxon>
        <taxon>Chlorobiaceae</taxon>
        <taxon>Chlorobium/Pelodictyon group</taxon>
        <taxon>Pelodictyon</taxon>
    </lineage>
</organism>
<accession>Q3B2F0</accession>
<keyword id="KW-0963">Cytoplasm</keyword>
<keyword id="KW-0521">NADP</keyword>
<keyword id="KW-0560">Oxidoreductase</keyword>
<keyword id="KW-0671">Queuosine biosynthesis</keyword>
<keyword id="KW-1185">Reference proteome</keyword>
<name>QUEF_CHLL3</name>
<protein>
    <recommendedName>
        <fullName evidence="1">NADPH-dependent 7-cyano-7-deazaguanine reductase</fullName>
        <ecNumber evidence="1">1.7.1.13</ecNumber>
    </recommendedName>
    <alternativeName>
        <fullName evidence="1">7-cyano-7-carbaguanine reductase</fullName>
    </alternativeName>
    <alternativeName>
        <fullName evidence="1">NADPH-dependent nitrile oxidoreductase</fullName>
    </alternativeName>
    <alternativeName>
        <fullName evidence="1">PreQ(0) reductase</fullName>
    </alternativeName>
</protein>
<sequence length="116" mass="13195">MKQEILEVFDNTYPDRDYTIEIVNPEFTSVCPKTGLPDFGTITVSYIPDKTCIELKSLKYYFLEFRNAGIFYENVTNRILDDLVAVSSPRSMTVRTEWKARGGITETVTVSHNASA</sequence>
<comment type="function">
    <text evidence="1">Catalyzes the NADPH-dependent reduction of 7-cyano-7-deazaguanine (preQ0) to 7-aminomethyl-7-deazaguanine (preQ1).</text>
</comment>
<comment type="catalytic activity">
    <reaction evidence="1">
        <text>7-aminomethyl-7-carbaguanine + 2 NADP(+) = 7-cyano-7-deazaguanine + 2 NADPH + 3 H(+)</text>
        <dbReference type="Rhea" id="RHEA:13409"/>
        <dbReference type="ChEBI" id="CHEBI:15378"/>
        <dbReference type="ChEBI" id="CHEBI:45075"/>
        <dbReference type="ChEBI" id="CHEBI:57783"/>
        <dbReference type="ChEBI" id="CHEBI:58349"/>
        <dbReference type="ChEBI" id="CHEBI:58703"/>
        <dbReference type="EC" id="1.7.1.13"/>
    </reaction>
</comment>
<comment type="pathway">
    <text evidence="1">tRNA modification; tRNA-queuosine biosynthesis.</text>
</comment>
<comment type="subcellular location">
    <subcellularLocation>
        <location evidence="1">Cytoplasm</location>
    </subcellularLocation>
</comment>
<comment type="similarity">
    <text evidence="1">Belongs to the GTP cyclohydrolase I family. QueF type 1 subfamily.</text>
</comment>
<feature type="chain" id="PRO_0000247687" description="NADPH-dependent 7-cyano-7-deazaguanine reductase">
    <location>
        <begin position="1"/>
        <end position="116"/>
    </location>
</feature>
<feature type="active site" description="Thioimide intermediate" evidence="1">
    <location>
        <position position="31"/>
    </location>
</feature>
<feature type="active site" description="Proton donor" evidence="1">
    <location>
        <position position="38"/>
    </location>
</feature>
<feature type="binding site" evidence="1">
    <location>
        <begin position="53"/>
        <end position="55"/>
    </location>
    <ligand>
        <name>substrate</name>
    </ligand>
</feature>
<feature type="binding site" evidence="1">
    <location>
        <begin position="72"/>
        <end position="73"/>
    </location>
    <ligand>
        <name>substrate</name>
    </ligand>
</feature>
<gene>
    <name evidence="1" type="primary">queF</name>
    <name type="ordered locus">Plut_1627</name>
</gene>
<reference key="1">
    <citation type="submission" date="2005-08" db="EMBL/GenBank/DDBJ databases">
        <title>Complete sequence of Pelodictyon luteolum DSM 273.</title>
        <authorList>
            <consortium name="US DOE Joint Genome Institute"/>
            <person name="Copeland A."/>
            <person name="Lucas S."/>
            <person name="Lapidus A."/>
            <person name="Barry K."/>
            <person name="Detter J.C."/>
            <person name="Glavina T."/>
            <person name="Hammon N."/>
            <person name="Israni S."/>
            <person name="Pitluck S."/>
            <person name="Bryant D."/>
            <person name="Schmutz J."/>
            <person name="Larimer F."/>
            <person name="Land M."/>
            <person name="Kyrpides N."/>
            <person name="Ivanova N."/>
            <person name="Richardson P."/>
        </authorList>
    </citation>
    <scope>NUCLEOTIDE SEQUENCE [LARGE SCALE GENOMIC DNA]</scope>
    <source>
        <strain>DSM 273 / BCRC 81028 / 2530</strain>
    </source>
</reference>
<proteinExistence type="inferred from homology"/>